<keyword id="KW-0131">Cell cycle</keyword>
<keyword id="KW-0132">Cell division</keyword>
<keyword id="KW-0133">Cell shape</keyword>
<keyword id="KW-0961">Cell wall biogenesis/degradation</keyword>
<keyword id="KW-0963">Cytoplasm</keyword>
<keyword id="KW-0573">Peptidoglycan synthesis</keyword>
<keyword id="KW-0670">Pyruvate</keyword>
<keyword id="KW-0808">Transferase</keyword>
<proteinExistence type="inferred from homology"/>
<organism>
    <name type="scientific">Shewanella sp. (strain ANA-3)</name>
    <dbReference type="NCBI Taxonomy" id="94122"/>
    <lineage>
        <taxon>Bacteria</taxon>
        <taxon>Pseudomonadati</taxon>
        <taxon>Pseudomonadota</taxon>
        <taxon>Gammaproteobacteria</taxon>
        <taxon>Alteromonadales</taxon>
        <taxon>Shewanellaceae</taxon>
        <taxon>Shewanella</taxon>
    </lineage>
</organism>
<gene>
    <name evidence="1" type="primary">murA</name>
    <name type="ordered locus">Shewana3_0684</name>
</gene>
<accession>A0KT03</accession>
<sequence length="419" mass="44778">MDKLAIQASPPLAGDVIISGAKNAALPILMAGVLAETDFIVSNVPNLRDVSTSCKLLRCLGADVDELGNGQIRISTKNLNEFCAPYDLVKTMRASILILGPLLARYGTADVSLPGGCAIGARPVNLHLHGLEMMGAKIEVKEGYIKARVDGRLKGAHIFMDMVSVGATENLLMAAALADGETVIENAAREPEVIDLANCLIAMGAKITGVGSATLRIQGVERLQGCEYRVMPDRIETGSFLVAAAVTRGRIRCLKADPASLESVIAKLEDAGAKITTGEDWIELDMEGKRPKAVNIKTAPYPGFPTDMQAQFCVLNVLAQGTATITETIFENRFMHVPELIRMGANMELEGNTCIIQGIESLSGAQVMATDLRASASLVIAGLVADGKTIVDRIYHLDRGYEHIEQKFQGLGAHVERVQ</sequence>
<dbReference type="EC" id="2.5.1.7" evidence="1"/>
<dbReference type="EMBL" id="CP000469">
    <property type="protein sequence ID" value="ABK46922.1"/>
    <property type="molecule type" value="Genomic_DNA"/>
</dbReference>
<dbReference type="RefSeq" id="WP_011621482.1">
    <property type="nucleotide sequence ID" value="NC_008577.1"/>
</dbReference>
<dbReference type="SMR" id="A0KT03"/>
<dbReference type="STRING" id="94122.Shewana3_0684"/>
<dbReference type="GeneID" id="94726674"/>
<dbReference type="KEGG" id="shn:Shewana3_0684"/>
<dbReference type="eggNOG" id="COG0766">
    <property type="taxonomic scope" value="Bacteria"/>
</dbReference>
<dbReference type="HOGENOM" id="CLU_027387_0_0_6"/>
<dbReference type="OrthoDB" id="9803760at2"/>
<dbReference type="UniPathway" id="UPA00219"/>
<dbReference type="Proteomes" id="UP000002589">
    <property type="component" value="Chromosome"/>
</dbReference>
<dbReference type="GO" id="GO:0005737">
    <property type="term" value="C:cytoplasm"/>
    <property type="evidence" value="ECO:0007669"/>
    <property type="project" value="UniProtKB-SubCell"/>
</dbReference>
<dbReference type="GO" id="GO:0008760">
    <property type="term" value="F:UDP-N-acetylglucosamine 1-carboxyvinyltransferase activity"/>
    <property type="evidence" value="ECO:0007669"/>
    <property type="project" value="UniProtKB-UniRule"/>
</dbReference>
<dbReference type="GO" id="GO:0051301">
    <property type="term" value="P:cell division"/>
    <property type="evidence" value="ECO:0007669"/>
    <property type="project" value="UniProtKB-KW"/>
</dbReference>
<dbReference type="GO" id="GO:0071555">
    <property type="term" value="P:cell wall organization"/>
    <property type="evidence" value="ECO:0007669"/>
    <property type="project" value="UniProtKB-KW"/>
</dbReference>
<dbReference type="GO" id="GO:0009252">
    <property type="term" value="P:peptidoglycan biosynthetic process"/>
    <property type="evidence" value="ECO:0007669"/>
    <property type="project" value="UniProtKB-UniRule"/>
</dbReference>
<dbReference type="GO" id="GO:0008360">
    <property type="term" value="P:regulation of cell shape"/>
    <property type="evidence" value="ECO:0007669"/>
    <property type="project" value="UniProtKB-KW"/>
</dbReference>
<dbReference type="GO" id="GO:0019277">
    <property type="term" value="P:UDP-N-acetylgalactosamine biosynthetic process"/>
    <property type="evidence" value="ECO:0007669"/>
    <property type="project" value="InterPro"/>
</dbReference>
<dbReference type="CDD" id="cd01555">
    <property type="entry name" value="UdpNAET"/>
    <property type="match status" value="1"/>
</dbReference>
<dbReference type="FunFam" id="3.65.10.10:FF:000002">
    <property type="entry name" value="UDP-N-acetylglucosamine 1-carboxyvinyltransferase"/>
    <property type="match status" value="1"/>
</dbReference>
<dbReference type="Gene3D" id="3.65.10.10">
    <property type="entry name" value="Enolpyruvate transferase domain"/>
    <property type="match status" value="2"/>
</dbReference>
<dbReference type="HAMAP" id="MF_00111">
    <property type="entry name" value="MurA"/>
    <property type="match status" value="1"/>
</dbReference>
<dbReference type="InterPro" id="IPR001986">
    <property type="entry name" value="Enolpyruvate_Tfrase_dom"/>
</dbReference>
<dbReference type="InterPro" id="IPR036968">
    <property type="entry name" value="Enolpyruvate_Tfrase_sf"/>
</dbReference>
<dbReference type="InterPro" id="IPR050068">
    <property type="entry name" value="MurA_subfamily"/>
</dbReference>
<dbReference type="InterPro" id="IPR013792">
    <property type="entry name" value="RNA3'P_cycl/enolpyr_Trfase_a/b"/>
</dbReference>
<dbReference type="InterPro" id="IPR005750">
    <property type="entry name" value="UDP_GlcNAc_COvinyl_MurA"/>
</dbReference>
<dbReference type="NCBIfam" id="TIGR01072">
    <property type="entry name" value="murA"/>
    <property type="match status" value="1"/>
</dbReference>
<dbReference type="NCBIfam" id="NF006873">
    <property type="entry name" value="PRK09369.1"/>
    <property type="match status" value="1"/>
</dbReference>
<dbReference type="PANTHER" id="PTHR43783">
    <property type="entry name" value="UDP-N-ACETYLGLUCOSAMINE 1-CARBOXYVINYLTRANSFERASE"/>
    <property type="match status" value="1"/>
</dbReference>
<dbReference type="PANTHER" id="PTHR43783:SF1">
    <property type="entry name" value="UDP-N-ACETYLGLUCOSAMINE 1-CARBOXYVINYLTRANSFERASE"/>
    <property type="match status" value="1"/>
</dbReference>
<dbReference type="Pfam" id="PF00275">
    <property type="entry name" value="EPSP_synthase"/>
    <property type="match status" value="1"/>
</dbReference>
<dbReference type="SUPFAM" id="SSF55205">
    <property type="entry name" value="EPT/RTPC-like"/>
    <property type="match status" value="1"/>
</dbReference>
<name>MURA_SHESA</name>
<feature type="chain" id="PRO_1000023104" description="UDP-N-acetylglucosamine 1-carboxyvinyltransferase">
    <location>
        <begin position="1"/>
        <end position="419"/>
    </location>
</feature>
<feature type="active site" description="Proton donor" evidence="1">
    <location>
        <position position="117"/>
    </location>
</feature>
<feature type="binding site" evidence="1">
    <location>
        <begin position="22"/>
        <end position="23"/>
    </location>
    <ligand>
        <name>phosphoenolpyruvate</name>
        <dbReference type="ChEBI" id="CHEBI:58702"/>
    </ligand>
</feature>
<feature type="binding site" evidence="1">
    <location>
        <position position="93"/>
    </location>
    <ligand>
        <name>UDP-N-acetyl-alpha-D-glucosamine</name>
        <dbReference type="ChEBI" id="CHEBI:57705"/>
    </ligand>
</feature>
<feature type="binding site" evidence="1">
    <location>
        <position position="307"/>
    </location>
    <ligand>
        <name>UDP-N-acetyl-alpha-D-glucosamine</name>
        <dbReference type="ChEBI" id="CHEBI:57705"/>
    </ligand>
</feature>
<feature type="binding site" evidence="1">
    <location>
        <position position="329"/>
    </location>
    <ligand>
        <name>UDP-N-acetyl-alpha-D-glucosamine</name>
        <dbReference type="ChEBI" id="CHEBI:57705"/>
    </ligand>
</feature>
<feature type="modified residue" description="2-(S-cysteinyl)pyruvic acid O-phosphothioketal" evidence="1">
    <location>
        <position position="117"/>
    </location>
</feature>
<reference key="1">
    <citation type="submission" date="2006-09" db="EMBL/GenBank/DDBJ databases">
        <title>Complete sequence of chromosome 1 of Shewanella sp. ANA-3.</title>
        <authorList>
            <person name="Copeland A."/>
            <person name="Lucas S."/>
            <person name="Lapidus A."/>
            <person name="Barry K."/>
            <person name="Detter J.C."/>
            <person name="Glavina del Rio T."/>
            <person name="Hammon N."/>
            <person name="Israni S."/>
            <person name="Dalin E."/>
            <person name="Tice H."/>
            <person name="Pitluck S."/>
            <person name="Chertkov O."/>
            <person name="Brettin T."/>
            <person name="Bruce D."/>
            <person name="Han C."/>
            <person name="Tapia R."/>
            <person name="Gilna P."/>
            <person name="Schmutz J."/>
            <person name="Larimer F."/>
            <person name="Land M."/>
            <person name="Hauser L."/>
            <person name="Kyrpides N."/>
            <person name="Kim E."/>
            <person name="Newman D."/>
            <person name="Salticov C."/>
            <person name="Konstantinidis K."/>
            <person name="Klappenback J."/>
            <person name="Tiedje J."/>
            <person name="Richardson P."/>
        </authorList>
    </citation>
    <scope>NUCLEOTIDE SEQUENCE [LARGE SCALE GENOMIC DNA]</scope>
    <source>
        <strain>ANA-3</strain>
    </source>
</reference>
<evidence type="ECO:0000255" key="1">
    <source>
        <dbReference type="HAMAP-Rule" id="MF_00111"/>
    </source>
</evidence>
<comment type="function">
    <text evidence="1">Cell wall formation. Adds enolpyruvyl to UDP-N-acetylglucosamine.</text>
</comment>
<comment type="catalytic activity">
    <reaction evidence="1">
        <text>phosphoenolpyruvate + UDP-N-acetyl-alpha-D-glucosamine = UDP-N-acetyl-3-O-(1-carboxyvinyl)-alpha-D-glucosamine + phosphate</text>
        <dbReference type="Rhea" id="RHEA:18681"/>
        <dbReference type="ChEBI" id="CHEBI:43474"/>
        <dbReference type="ChEBI" id="CHEBI:57705"/>
        <dbReference type="ChEBI" id="CHEBI:58702"/>
        <dbReference type="ChEBI" id="CHEBI:68483"/>
        <dbReference type="EC" id="2.5.1.7"/>
    </reaction>
</comment>
<comment type="pathway">
    <text evidence="1">Cell wall biogenesis; peptidoglycan biosynthesis.</text>
</comment>
<comment type="subcellular location">
    <subcellularLocation>
        <location evidence="1">Cytoplasm</location>
    </subcellularLocation>
</comment>
<comment type="similarity">
    <text evidence="1">Belongs to the EPSP synthase family. MurA subfamily.</text>
</comment>
<protein>
    <recommendedName>
        <fullName evidence="1">UDP-N-acetylglucosamine 1-carboxyvinyltransferase</fullName>
        <ecNumber evidence="1">2.5.1.7</ecNumber>
    </recommendedName>
    <alternativeName>
        <fullName evidence="1">Enoylpyruvate transferase</fullName>
    </alternativeName>
    <alternativeName>
        <fullName evidence="1">UDP-N-acetylglucosamine enolpyruvyl transferase</fullName>
        <shortName evidence="1">EPT</shortName>
    </alternativeName>
</protein>